<accession>P33865</accession>
<reference key="1">
    <citation type="journal article" date="1993" name="Virus Res.">
        <title>Analysis of the nucleotide sequence of a 43 kbp segment of the genome of variola virus India-1967 strain.</title>
        <authorList>
            <person name="Shchelkunov S.N."/>
            <person name="Blinov V.M."/>
            <person name="Resenchuk S.M."/>
            <person name="Totmenin A.V."/>
            <person name="Sandakhchiev L.S."/>
        </authorList>
    </citation>
    <scope>NUCLEOTIDE SEQUENCE [GENOMIC DNA]</scope>
    <source>
        <strain>India-1967 / Isolate Ind3</strain>
    </source>
</reference>
<reference key="2">
    <citation type="journal article" date="1993" name="FEBS Lett.">
        <title>Genes of variola and vaccinia viruses necessary to overcome the host protective mechanisms.</title>
        <authorList>
            <person name="Shchelkunov S.N."/>
            <person name="Blinov V.M."/>
            <person name="Sandakhchiev L.S."/>
        </authorList>
    </citation>
    <scope>NUCLEOTIDE SEQUENCE [GENOMIC DNA]</scope>
    <source>
        <strain>India-1967 / Isolate Ind3</strain>
    </source>
</reference>
<organismHost>
    <name type="scientific">Homo sapiens</name>
    <name type="common">Human</name>
    <dbReference type="NCBI Taxonomy" id="9606"/>
</organismHost>
<protein>
    <recommendedName>
        <fullName>Protein OPG049</fullName>
    </recommendedName>
    <alternativeName>
        <fullName>36 kDa major membrane protein F5</fullName>
    </alternativeName>
</protein>
<feature type="signal peptide" evidence="2">
    <location>
        <begin position="1"/>
        <end position="20"/>
    </location>
</feature>
<feature type="chain" id="PRO_0000040617" description="Protein OPG049">
    <location>
        <begin position="21"/>
        <end position="322"/>
    </location>
</feature>
<feature type="transmembrane region" description="Helical" evidence="2">
    <location>
        <begin position="287"/>
        <end position="307"/>
    </location>
</feature>
<feature type="glycosylation site" description="N-linked (GlcNAc...) asparagine; by host" evidence="2">
    <location>
        <position position="36"/>
    </location>
</feature>
<feature type="glycosylation site" description="N-linked (GlcNAc...) asparagine; by host" evidence="2">
    <location>
        <position position="41"/>
    </location>
</feature>
<feature type="glycosylation site" description="N-linked (GlcNAc...) asparagine; by host" evidence="2">
    <location>
        <position position="72"/>
    </location>
</feature>
<feature type="glycosylation site" description="N-linked (GlcNAc...) asparagine; by host" evidence="2">
    <location>
        <position position="79"/>
    </location>
</feature>
<feature type="glycosylation site" description="N-linked (GlcNAc...) asparagine; by host" evidence="2">
    <location>
        <position position="108"/>
    </location>
</feature>
<feature type="glycosylation site" description="N-linked (GlcNAc...) asparagine; by host" evidence="2">
    <location>
        <position position="144"/>
    </location>
</feature>
<feature type="glycosylation site" description="N-linked (GlcNAc...) asparagine; by host" evidence="2">
    <location>
        <position position="219"/>
    </location>
</feature>
<feature type="glycosylation site" description="N-linked (GlcNAc...) asparagine; by host" evidence="2">
    <location>
        <position position="245"/>
    </location>
</feature>
<keyword id="KW-0325">Glycoprotein</keyword>
<keyword id="KW-1032">Host cell membrane</keyword>
<keyword id="KW-1043">Host membrane</keyword>
<keyword id="KW-0472">Membrane</keyword>
<keyword id="KW-1185">Reference proteome</keyword>
<keyword id="KW-0732">Signal</keyword>
<keyword id="KW-0812">Transmembrane</keyword>
<keyword id="KW-1133">Transmembrane helix</keyword>
<proteinExistence type="inferred from homology"/>
<gene>
    <name type="primary">OPG049</name>
    <name type="ORF">C9L</name>
    <name type="ORF">F5L</name>
</gene>
<dbReference type="EMBL" id="X69198">
    <property type="protein sequence ID" value="CAA48970.1"/>
    <property type="status" value="ALT_INIT"/>
    <property type="molecule type" value="Genomic_DNA"/>
</dbReference>
<dbReference type="PIR" id="I36839">
    <property type="entry name" value="I36839"/>
</dbReference>
<dbReference type="RefSeq" id="NP_042073.2">
    <property type="nucleotide sequence ID" value="NC_001611.1"/>
</dbReference>
<dbReference type="SMR" id="P33865"/>
<dbReference type="GeneID" id="1486389"/>
<dbReference type="KEGG" id="vg:1486389"/>
<dbReference type="Proteomes" id="UP000002060">
    <property type="component" value="Segment"/>
</dbReference>
<dbReference type="GO" id="GO:0020002">
    <property type="term" value="C:host cell plasma membrane"/>
    <property type="evidence" value="ECO:0007669"/>
    <property type="project" value="UniProtKB-SubCell"/>
</dbReference>
<dbReference type="GO" id="GO:0016020">
    <property type="term" value="C:membrane"/>
    <property type="evidence" value="ECO:0007669"/>
    <property type="project" value="UniProtKB-KW"/>
</dbReference>
<dbReference type="GO" id="GO:0016032">
    <property type="term" value="P:viral process"/>
    <property type="evidence" value="ECO:0007669"/>
    <property type="project" value="InterPro"/>
</dbReference>
<dbReference type="InterPro" id="IPR036179">
    <property type="entry name" value="Ig-like_dom_sf"/>
</dbReference>
<dbReference type="InterPro" id="IPR007674">
    <property type="entry name" value="Poxvirus_F5/I6_dom"/>
</dbReference>
<dbReference type="Pfam" id="PF04595">
    <property type="entry name" value="Pox_I6"/>
    <property type="match status" value="1"/>
</dbReference>
<dbReference type="SUPFAM" id="SSF48726">
    <property type="entry name" value="Immunoglobulin"/>
    <property type="match status" value="1"/>
</dbReference>
<evidence type="ECO:0000250" key="1">
    <source>
        <dbReference type="UniProtKB" id="P24358"/>
    </source>
</evidence>
<evidence type="ECO:0000255" key="2"/>
<evidence type="ECO:0000305" key="3"/>
<name>PG049_VAR67</name>
<organism>
    <name type="scientific">Variola virus (isolate Human/India/Ind3/1967)</name>
    <name type="common">VARV</name>
    <name type="synonym">Smallpox virus</name>
    <dbReference type="NCBI Taxonomy" id="587200"/>
    <lineage>
        <taxon>Viruses</taxon>
        <taxon>Varidnaviria</taxon>
        <taxon>Bamfordvirae</taxon>
        <taxon>Nucleocytoviricota</taxon>
        <taxon>Pokkesviricetes</taxon>
        <taxon>Chitovirales</taxon>
        <taxon>Poxviridae</taxon>
        <taxon>Chordopoxvirinae</taxon>
        <taxon>Orthopoxvirus</taxon>
        <taxon>Variola virus</taxon>
    </lineage>
</organism>
<comment type="function">
    <text evidence="1">Plays a role in the spread of virus to neighboring cells ex vivo.</text>
</comment>
<comment type="subcellular location">
    <subcellularLocation>
        <location evidence="1">Host cell membrane</location>
        <topology evidence="1">Single-pass membrane protein</topology>
    </subcellularLocation>
    <text evidence="1">May localize at the surface of cytoplasmic extensions at the periphery of the cell.</text>
</comment>
<comment type="induction">
    <text evidence="1">Expressed in the early phase of the viral replicative cycle.</text>
</comment>
<comment type="similarity">
    <text evidence="3">Belongs to the orthopoxvirus OPG049 family.</text>
</comment>
<comment type="sequence caution" evidence="3">
    <conflict type="erroneous initiation">
        <sequence resource="EMBL-CDS" id="CAA48970"/>
    </conflict>
</comment>
<sequence length="322" mass="36721">MGTNTIRAFIILYLLAVCGCVEYDVDNNVQICTCANVSHINHTFWYYNNKVIALATEDRTSGYISSFIKRVNISLTCLNISSLRYEDSGSYKGVSHLKDGVIVTTTMNISVKANIIDLTGRVCYLTRNYCEVKIRCEIKSFALNGSITPLHMILGTLDRWKYLPFPTDDYRYVGELKRYISGNPYPIESLALEISATFNRFTIVKNNDDEFSCYLFSQNYSFHKMLNARHICESEWEALNNNNDNSSSMPVSHNNRANDLSSMMSQLQNDNDDNNDYSAPMNINNLIMIVLITMLSIIIIIIVVIAIIAMYKRSKYSHIDDN</sequence>